<evidence type="ECO:0000255" key="1">
    <source>
        <dbReference type="HAMAP-Rule" id="MF_02071"/>
    </source>
</evidence>
<evidence type="ECO:0000256" key="2">
    <source>
        <dbReference type="SAM" id="MobiDB-lite"/>
    </source>
</evidence>
<name>RLPA_HELPY</name>
<organism>
    <name type="scientific">Helicobacter pylori (strain ATCC 700392 / 26695)</name>
    <name type="common">Campylobacter pylori</name>
    <dbReference type="NCBI Taxonomy" id="85962"/>
    <lineage>
        <taxon>Bacteria</taxon>
        <taxon>Pseudomonadati</taxon>
        <taxon>Campylobacterota</taxon>
        <taxon>Epsilonproteobacteria</taxon>
        <taxon>Campylobacterales</taxon>
        <taxon>Helicobacteraceae</taxon>
        <taxon>Helicobacter</taxon>
    </lineage>
</organism>
<proteinExistence type="inferred from homology"/>
<sequence>MGLALEKVCFLGVIFLISACTVKKEGVKNLSYKHESLRAYENAKDYDPTTKKAAYKRNFFERHFKRYSDSQDSNTKDQPLDNGMRDSSSIQRATMRPYQVGGKWYYPTKVDLGEKFDGVASWYGPNFHAKKTSNGEIYNMYAHTAAHKTLPMNTVVKVINVDNNLSTIVRINDRGPFVSDRIIDLSNAAARDIDMVKKGTASVRLIVLGFGGVISTQYEQSFNASSSKILHKEFKVGESEKSVSGGKFSLQMGAFRNQIGAQTLADKLQAENPNYSVKVAFKDDLYKVLVQGFQSEEEARDFMKKYNQNAVLTRE</sequence>
<accession>O26091</accession>
<comment type="function">
    <text evidence="1">Lytic transglycosylase with a strong preference for naked glycan strands that lack stem peptides.</text>
</comment>
<comment type="subcellular location">
    <subcellularLocation>
        <location evidence="1">Cell membrane</location>
        <topology evidence="1">Lipid-anchor</topology>
    </subcellularLocation>
</comment>
<comment type="similarity">
    <text evidence="1">Belongs to the RlpA family.</text>
</comment>
<keyword id="KW-1003">Cell membrane</keyword>
<keyword id="KW-0961">Cell wall biogenesis/degradation</keyword>
<keyword id="KW-0449">Lipoprotein</keyword>
<keyword id="KW-0456">Lyase</keyword>
<keyword id="KW-0472">Membrane</keyword>
<keyword id="KW-0564">Palmitate</keyword>
<keyword id="KW-1185">Reference proteome</keyword>
<keyword id="KW-0732">Signal</keyword>
<protein>
    <recommendedName>
        <fullName evidence="1">Endolytic peptidoglycan transglycosylase RlpA</fullName>
        <ecNumber evidence="1">4.2.2.-</ecNumber>
    </recommendedName>
</protein>
<gene>
    <name evidence="1" type="primary">rlpA</name>
    <name type="ordered locus">HP_1571</name>
</gene>
<feature type="signal peptide" evidence="1">
    <location>
        <begin position="1"/>
        <end position="19"/>
    </location>
</feature>
<feature type="chain" id="PRO_0000030804" description="Endolytic peptidoglycan transglycosylase RlpA" evidence="1">
    <location>
        <begin position="20"/>
        <end position="315"/>
    </location>
</feature>
<feature type="domain" description="SPOR" evidence="1">
    <location>
        <begin position="242"/>
        <end position="315"/>
    </location>
</feature>
<feature type="region of interest" description="Disordered" evidence="2">
    <location>
        <begin position="68"/>
        <end position="92"/>
    </location>
</feature>
<feature type="compositionally biased region" description="Basic and acidic residues" evidence="2">
    <location>
        <begin position="68"/>
        <end position="79"/>
    </location>
</feature>
<feature type="lipid moiety-binding region" description="N-palmitoyl cysteine" evidence="1">
    <location>
        <position position="20"/>
    </location>
</feature>
<feature type="lipid moiety-binding region" description="S-diacylglycerol cysteine" evidence="1">
    <location>
        <position position="20"/>
    </location>
</feature>
<dbReference type="EC" id="4.2.2.-" evidence="1"/>
<dbReference type="EMBL" id="AE000511">
    <property type="protein sequence ID" value="AAD08608.1"/>
    <property type="molecule type" value="Genomic_DNA"/>
</dbReference>
<dbReference type="PIR" id="C64716">
    <property type="entry name" value="C64716"/>
</dbReference>
<dbReference type="RefSeq" id="NP_208362.1">
    <property type="nucleotide sequence ID" value="NC_000915.1"/>
</dbReference>
<dbReference type="RefSeq" id="WP_000521815.1">
    <property type="nucleotide sequence ID" value="NC_018939.1"/>
</dbReference>
<dbReference type="SMR" id="O26091"/>
<dbReference type="DIP" id="DIP-3473N"/>
<dbReference type="IntAct" id="O26091">
    <property type="interactions" value="1"/>
</dbReference>
<dbReference type="MINT" id="O26091"/>
<dbReference type="STRING" id="85962.HP_1571"/>
<dbReference type="PaxDb" id="85962-C694_08140"/>
<dbReference type="EnsemblBacteria" id="AAD08608">
    <property type="protein sequence ID" value="AAD08608"/>
    <property type="gene ID" value="HP_1571"/>
</dbReference>
<dbReference type="KEGG" id="heo:C694_08140"/>
<dbReference type="KEGG" id="hpy:HP_1571"/>
<dbReference type="PATRIC" id="fig|85962.47.peg.1689"/>
<dbReference type="eggNOG" id="COG0797">
    <property type="taxonomic scope" value="Bacteria"/>
</dbReference>
<dbReference type="InParanoid" id="O26091"/>
<dbReference type="OrthoDB" id="9779128at2"/>
<dbReference type="PhylomeDB" id="O26091"/>
<dbReference type="Proteomes" id="UP000000429">
    <property type="component" value="Chromosome"/>
</dbReference>
<dbReference type="GO" id="GO:0005886">
    <property type="term" value="C:plasma membrane"/>
    <property type="evidence" value="ECO:0007669"/>
    <property type="project" value="UniProtKB-SubCell"/>
</dbReference>
<dbReference type="GO" id="GO:0008932">
    <property type="term" value="F:lytic endotransglycosylase activity"/>
    <property type="evidence" value="ECO:0007669"/>
    <property type="project" value="UniProtKB-UniRule"/>
</dbReference>
<dbReference type="GO" id="GO:0042834">
    <property type="term" value="F:peptidoglycan binding"/>
    <property type="evidence" value="ECO:0007669"/>
    <property type="project" value="InterPro"/>
</dbReference>
<dbReference type="GO" id="GO:0071555">
    <property type="term" value="P:cell wall organization"/>
    <property type="evidence" value="ECO:0007669"/>
    <property type="project" value="UniProtKB-KW"/>
</dbReference>
<dbReference type="GO" id="GO:0000270">
    <property type="term" value="P:peptidoglycan metabolic process"/>
    <property type="evidence" value="ECO:0007669"/>
    <property type="project" value="UniProtKB-UniRule"/>
</dbReference>
<dbReference type="CDD" id="cd22268">
    <property type="entry name" value="DPBB_RlpA-like"/>
    <property type="match status" value="1"/>
</dbReference>
<dbReference type="Gene3D" id="2.40.40.10">
    <property type="entry name" value="RlpA-like domain"/>
    <property type="match status" value="1"/>
</dbReference>
<dbReference type="Gene3D" id="3.30.70.1070">
    <property type="entry name" value="Sporulation related repeat"/>
    <property type="match status" value="1"/>
</dbReference>
<dbReference type="HAMAP" id="MF_02071">
    <property type="entry name" value="RlpA"/>
    <property type="match status" value="1"/>
</dbReference>
<dbReference type="InterPro" id="IPR034718">
    <property type="entry name" value="RlpA"/>
</dbReference>
<dbReference type="InterPro" id="IPR009009">
    <property type="entry name" value="RlpA-like_DPBB"/>
</dbReference>
<dbReference type="InterPro" id="IPR036908">
    <property type="entry name" value="RlpA-like_sf"/>
</dbReference>
<dbReference type="InterPro" id="IPR012997">
    <property type="entry name" value="RplA"/>
</dbReference>
<dbReference type="InterPro" id="IPR007730">
    <property type="entry name" value="SPOR-like_dom"/>
</dbReference>
<dbReference type="InterPro" id="IPR036680">
    <property type="entry name" value="SPOR-like_sf"/>
</dbReference>
<dbReference type="NCBIfam" id="TIGR00413">
    <property type="entry name" value="rlpA"/>
    <property type="match status" value="1"/>
</dbReference>
<dbReference type="PANTHER" id="PTHR34183">
    <property type="entry name" value="ENDOLYTIC PEPTIDOGLYCAN TRANSGLYCOSYLASE RLPA"/>
    <property type="match status" value="1"/>
</dbReference>
<dbReference type="PANTHER" id="PTHR34183:SF1">
    <property type="entry name" value="ENDOLYTIC PEPTIDOGLYCAN TRANSGLYCOSYLASE RLPA"/>
    <property type="match status" value="1"/>
</dbReference>
<dbReference type="Pfam" id="PF03330">
    <property type="entry name" value="DPBB_1"/>
    <property type="match status" value="1"/>
</dbReference>
<dbReference type="Pfam" id="PF05036">
    <property type="entry name" value="SPOR"/>
    <property type="match status" value="1"/>
</dbReference>
<dbReference type="SUPFAM" id="SSF50685">
    <property type="entry name" value="Barwin-like endoglucanases"/>
    <property type="match status" value="1"/>
</dbReference>
<dbReference type="SUPFAM" id="SSF110997">
    <property type="entry name" value="Sporulation related repeat"/>
    <property type="match status" value="1"/>
</dbReference>
<dbReference type="PROSITE" id="PS51257">
    <property type="entry name" value="PROKAR_LIPOPROTEIN"/>
    <property type="match status" value="1"/>
</dbReference>
<dbReference type="PROSITE" id="PS51724">
    <property type="entry name" value="SPOR"/>
    <property type="match status" value="1"/>
</dbReference>
<reference key="1">
    <citation type="journal article" date="1997" name="Nature">
        <title>The complete genome sequence of the gastric pathogen Helicobacter pylori.</title>
        <authorList>
            <person name="Tomb J.-F."/>
            <person name="White O."/>
            <person name="Kerlavage A.R."/>
            <person name="Clayton R.A."/>
            <person name="Sutton G.G."/>
            <person name="Fleischmann R.D."/>
            <person name="Ketchum K.A."/>
            <person name="Klenk H.-P."/>
            <person name="Gill S.R."/>
            <person name="Dougherty B.A."/>
            <person name="Nelson K.E."/>
            <person name="Quackenbush J."/>
            <person name="Zhou L."/>
            <person name="Kirkness E.F."/>
            <person name="Peterson S.N."/>
            <person name="Loftus B.J."/>
            <person name="Richardson D.L."/>
            <person name="Dodson R.J."/>
            <person name="Khalak H.G."/>
            <person name="Glodek A."/>
            <person name="McKenney K."/>
            <person name="FitzGerald L.M."/>
            <person name="Lee N."/>
            <person name="Adams M.D."/>
            <person name="Hickey E.K."/>
            <person name="Berg D.E."/>
            <person name="Gocayne J.D."/>
            <person name="Utterback T.R."/>
            <person name="Peterson J.D."/>
            <person name="Kelley J.M."/>
            <person name="Cotton M.D."/>
            <person name="Weidman J.F."/>
            <person name="Fujii C."/>
            <person name="Bowman C."/>
            <person name="Watthey L."/>
            <person name="Wallin E."/>
            <person name="Hayes W.S."/>
            <person name="Borodovsky M."/>
            <person name="Karp P.D."/>
            <person name="Smith H.O."/>
            <person name="Fraser C.M."/>
            <person name="Venter J.C."/>
        </authorList>
    </citation>
    <scope>NUCLEOTIDE SEQUENCE [LARGE SCALE GENOMIC DNA]</scope>
    <source>
        <strain>ATCC 700392 / 26695</strain>
    </source>
</reference>